<gene>
    <name type="primary">Obsl1</name>
</gene>
<sequence>MKAGSGDQGSPPCFLRFPRPVRVVSGAEAELKCVVLGEPPPTVVWEKGGQQLVASERLSFPEDGAEHGLLLSGALPTDAGVYVCRARNAAGEAYAAAAVTVLEPPAPEPEPESSECPLPTPGTGEGAPKFLTGPQSQWVLRGEEVVLTCQVGGLPEPKLYWEKDGMALDEVWDSSHFKLEPGRGASDEGASLTLRILAARLPDSGVYVCHARNAHGHAQAGALLQVHQPRESPPQDPDENPKPVLEPLKGAPKTFWVNEGKHAKFRCYVMGKPEPEIEWHLEGRPLLPDRRRLMYRDRDGGFVLKVLYCQAKDRGLYVCAARNSAGQTLSAVQLHVKEPRLRFTRPLQDVEGREHGIVVLECKVPNSRIPTAWFREDQRLLPCRKYEQIEEGAVRRLVIHKLKADDDGVYLCEMRGRVRTVANVTVKGPILKRLPRKLDVLEGENAVLLVETQEAGVQGCWSRDGEDLPDTCQSSCGHMHALVLPGVTREDAGEITFSLGNSRTTTLLRVKCVKHSPPGPPVMVEMFKGQKNKVLLTWKPPEPPPETSFIYRLERQEVGSDDWIQCFSIEKAGAVEVPGDCVPTEGDYHFRICTVSEHGRSPHVVFNGSAHLVPTARLVSGLEDVQVYDGEDAVFSLDLSAIIQGSWFLNGEQLQSNEPEGQVEPGALRYRIEQKGLQHRLILQAVKHRDSGALVGFSCPGVQDSAALTIQESSVHILSPQDKVSLTFTTSERVVLTCELSRVDFPATWYKDGQKVEESESLIVKTEGRKHRLILPEAQVRDSGEFECRTEGVSAFFGVTVQDPPVHIVNPQEHVFVHAITSECVRLTCEVDREDTTVHWYKDGQEVEESDIIVLENKGPHHRLVLPAARPSDGGEFQCVAGDERAYFTVTITDVFSWIVYPSSEVHVAAVRLERVVLTCELCRPWAEVRWTKDGEEVVESPALLLEKEDTIRRLVLPSVQLEDSGEYLCEIHDESASFTITVTEPPVRIIYPQDEVTLHAVSLECVVLTCELSREDAPVRWYKDGLEVEESEALVLQSDGPRRRLVLPAAQPEDGGEFVCDAGDDSAFFTVTVTAPPERIVHPAARSLDLQFGAPGHVELRCEVAPAGSQVRWYKDGLEVEVSDALQLGAEGPARTLTLPHAQPEDAGEYVCETRDEAVTFNVSLAELPVQFLAPEAAPNPLCVVPGEPVVLSCELSRASAQVFWSHNGSPVQQGEGLELRAEGPRRILCIQAADLAHTGVYTCQSGASPGAPSLSFNVQVAELPPVKLVSELTPLTVHEGDDATFQCEVSPPDAEVTWLRNGAVITAGPQLEMVQNGSSRTLIIRGCQLKDAGTVTARAGAADTSARLHVRETELLFLRRLQDVRAEEGQDVHLEVETGRVGAAGTVRWIRGGEPLPLDSRLTTAQDGHVHRLSIHGVLLTDQGTYGCESRHDRTLARLSVRPRQLRELRPLEDVTVHEGGSATFQLELSQEGVTGEWAQGGVRLHPGPKCHIQSEGRTHRLVLSGLGLADSGCVSFTADTLRCAARLTVREVPVTIVQGPQDLEVTEGDTATFECELSQTLADVIWEKDGQALSLSPRLRLQALGTRRLLLLRRCCSSDAGTYSCVVGTARSEPARLTVREREVSVLRELRSVSAREGDGATFECTVSETEITGRWELGGRALRPGGRVRIRQEGKKHILVLSELRTEDTGEVCFQAGPAQSLARLEVEALPLQMCRRPPREKTVLVNRRAVLEVTVSRPGGHVCWMREGVELCPGNKYETRRHGTTHSLVIHDVRPEDQGTYSCQAGQDSADTQLLVDGD</sequence>
<dbReference type="EMBL" id="AC115011">
    <property type="status" value="NOT_ANNOTATED_CDS"/>
    <property type="molecule type" value="Genomic_DNA"/>
</dbReference>
<dbReference type="EMBL" id="BC051643">
    <property type="protein sequence ID" value="AAH51643.1"/>
    <property type="molecule type" value="mRNA"/>
</dbReference>
<dbReference type="CCDS" id="CCDS15077.2">
    <molecule id="D3YYU8-1"/>
</dbReference>
<dbReference type="RefSeq" id="NP_849215.3">
    <property type="nucleotide sequence ID" value="NM_178884.5"/>
</dbReference>
<dbReference type="SMR" id="D3YYU8"/>
<dbReference type="BioGRID" id="221115">
    <property type="interactions" value="3"/>
</dbReference>
<dbReference type="FunCoup" id="D3YYU8">
    <property type="interactions" value="431"/>
</dbReference>
<dbReference type="STRING" id="10090.ENSMUSP00000109197"/>
<dbReference type="GlyGen" id="D3YYU8">
    <property type="glycosylation" value="1 site"/>
</dbReference>
<dbReference type="iPTMnet" id="D3YYU8"/>
<dbReference type="PhosphoSitePlus" id="D3YYU8"/>
<dbReference type="SwissPalm" id="D3YYU8"/>
<dbReference type="PaxDb" id="10090-ENSMUSP00000109197"/>
<dbReference type="PeptideAtlas" id="D3YYU8"/>
<dbReference type="ProteomicsDB" id="294060">
    <molecule id="D3YYU8-1"/>
</dbReference>
<dbReference type="ProteomicsDB" id="294061">
    <molecule id="D3YYU8-2"/>
</dbReference>
<dbReference type="Pumba" id="D3YYU8"/>
<dbReference type="Antibodypedia" id="52509">
    <property type="antibodies" value="16 antibodies from 7 providers"/>
</dbReference>
<dbReference type="DNASU" id="98733"/>
<dbReference type="GeneID" id="98733"/>
<dbReference type="KEGG" id="mmu:98733"/>
<dbReference type="UCSC" id="uc007bpn.2">
    <molecule id="D3YYU8-1"/>
    <property type="organism name" value="mouse"/>
</dbReference>
<dbReference type="UCSC" id="uc007bpp.3">
    <molecule id="D3YYU8-2"/>
    <property type="organism name" value="mouse"/>
</dbReference>
<dbReference type="AGR" id="MGI:2138628"/>
<dbReference type="CTD" id="23363"/>
<dbReference type="MGI" id="MGI:2138628">
    <property type="gene designation" value="Obsl1"/>
</dbReference>
<dbReference type="VEuPathDB" id="HostDB:ENSMUSG00000026211"/>
<dbReference type="eggNOG" id="KOG0613">
    <property type="taxonomic scope" value="Eukaryota"/>
</dbReference>
<dbReference type="HOGENOM" id="CLU_000630_0_0_1"/>
<dbReference type="InParanoid" id="D3YYU8"/>
<dbReference type="PhylomeDB" id="D3YYU8"/>
<dbReference type="BioGRID-ORCS" id="98733">
    <property type="hits" value="0 hits in 77 CRISPR screens"/>
</dbReference>
<dbReference type="ChiTaRS" id="Obsl1">
    <property type="organism name" value="mouse"/>
</dbReference>
<dbReference type="PRO" id="PR:D3YYU8"/>
<dbReference type="Proteomes" id="UP000000589">
    <property type="component" value="Chromosome 1"/>
</dbReference>
<dbReference type="RNAct" id="D3YYU8">
    <property type="molecule type" value="protein"/>
</dbReference>
<dbReference type="ExpressionAtlas" id="D3YYU8">
    <property type="expression patterns" value="baseline and differential"/>
</dbReference>
<dbReference type="GO" id="GO:1990393">
    <property type="term" value="C:3M complex"/>
    <property type="evidence" value="ECO:0000250"/>
    <property type="project" value="UniProtKB"/>
</dbReference>
<dbReference type="GO" id="GO:0005813">
    <property type="term" value="C:centrosome"/>
    <property type="evidence" value="ECO:0000250"/>
    <property type="project" value="UniProtKB"/>
</dbReference>
<dbReference type="GO" id="GO:0005737">
    <property type="term" value="C:cytoplasm"/>
    <property type="evidence" value="ECO:0000250"/>
    <property type="project" value="UniProtKB"/>
</dbReference>
<dbReference type="GO" id="GO:0005794">
    <property type="term" value="C:Golgi apparatus"/>
    <property type="evidence" value="ECO:0007669"/>
    <property type="project" value="UniProtKB-SubCell"/>
</dbReference>
<dbReference type="GO" id="GO:0048471">
    <property type="term" value="C:perinuclear region of cytoplasm"/>
    <property type="evidence" value="ECO:0007669"/>
    <property type="project" value="UniProtKB-SubCell"/>
</dbReference>
<dbReference type="GO" id="GO:0000226">
    <property type="term" value="P:microtubule cytoskeleton organization"/>
    <property type="evidence" value="ECO:0000250"/>
    <property type="project" value="UniProtKB"/>
</dbReference>
<dbReference type="GO" id="GO:0007088">
    <property type="term" value="P:regulation of mitotic nuclear division"/>
    <property type="evidence" value="ECO:0000250"/>
    <property type="project" value="UniProtKB"/>
</dbReference>
<dbReference type="CDD" id="cd00063">
    <property type="entry name" value="FN3"/>
    <property type="match status" value="1"/>
</dbReference>
<dbReference type="CDD" id="cd00096">
    <property type="entry name" value="Ig"/>
    <property type="match status" value="3"/>
</dbReference>
<dbReference type="FunFam" id="2.60.40.10:FF:000856">
    <property type="entry name" value="Obscurin like 1"/>
    <property type="match status" value="1"/>
</dbReference>
<dbReference type="FunFam" id="2.60.40.10:FF:000963">
    <property type="entry name" value="Obscurin like 1"/>
    <property type="match status" value="1"/>
</dbReference>
<dbReference type="FunFam" id="2.60.40.10:FF:001210">
    <property type="entry name" value="Obscurin like 1"/>
    <property type="match status" value="1"/>
</dbReference>
<dbReference type="FunFam" id="2.60.40.10:FF:001780">
    <property type="entry name" value="Obscurin like 1"/>
    <property type="match status" value="1"/>
</dbReference>
<dbReference type="FunFam" id="2.60.40.10:FF:001811">
    <property type="entry name" value="Obscurin like 1"/>
    <property type="match status" value="1"/>
</dbReference>
<dbReference type="FunFam" id="2.60.40.10:FF:000211">
    <property type="entry name" value="Obscurin-like protein 1"/>
    <property type="match status" value="2"/>
</dbReference>
<dbReference type="FunFam" id="2.60.40.10:FF:001375">
    <property type="entry name" value="Obscurin-like protein 1 isoform X2"/>
    <property type="match status" value="1"/>
</dbReference>
<dbReference type="FunFam" id="2.60.40.10:FF:000241">
    <property type="entry name" value="obscurin-like protein 1 isoform X2"/>
    <property type="match status" value="4"/>
</dbReference>
<dbReference type="FunFam" id="2.60.40.10:FF:000502">
    <property type="entry name" value="obscurin-like protein 1 isoform X2"/>
    <property type="match status" value="1"/>
</dbReference>
<dbReference type="FunFam" id="2.60.40.10:FF:000569">
    <property type="entry name" value="obscurin-like protein 1 isoform X2"/>
    <property type="match status" value="2"/>
</dbReference>
<dbReference type="FunFam" id="2.60.40.10:FF:000608">
    <property type="entry name" value="obscurin-like protein 1 isoform X2"/>
    <property type="match status" value="1"/>
</dbReference>
<dbReference type="FunFam" id="2.60.40.10:FF:000623">
    <property type="entry name" value="obscurin-like protein 1 isoform X2"/>
    <property type="match status" value="1"/>
</dbReference>
<dbReference type="FunFam" id="2.60.40.10:FF:000393">
    <property type="entry name" value="Putative obscurin-like protein 1"/>
    <property type="match status" value="1"/>
</dbReference>
<dbReference type="FunFam" id="2.60.40.10:FF:000464">
    <property type="entry name" value="Putative obscurin-like protein 1"/>
    <property type="match status" value="1"/>
</dbReference>
<dbReference type="Gene3D" id="2.60.40.10">
    <property type="entry name" value="Immunoglobulins"/>
    <property type="match status" value="19"/>
</dbReference>
<dbReference type="InterPro" id="IPR003961">
    <property type="entry name" value="FN3_dom"/>
</dbReference>
<dbReference type="InterPro" id="IPR036116">
    <property type="entry name" value="FN3_sf"/>
</dbReference>
<dbReference type="InterPro" id="IPR007110">
    <property type="entry name" value="Ig-like_dom"/>
</dbReference>
<dbReference type="InterPro" id="IPR036179">
    <property type="entry name" value="Ig-like_dom_sf"/>
</dbReference>
<dbReference type="InterPro" id="IPR013783">
    <property type="entry name" value="Ig-like_fold"/>
</dbReference>
<dbReference type="InterPro" id="IPR013098">
    <property type="entry name" value="Ig_I-set"/>
</dbReference>
<dbReference type="InterPro" id="IPR003599">
    <property type="entry name" value="Ig_sub"/>
</dbReference>
<dbReference type="InterPro" id="IPR003598">
    <property type="entry name" value="Ig_sub2"/>
</dbReference>
<dbReference type="InterPro" id="IPR052385">
    <property type="entry name" value="Obscurin/Obscurin-like_Reg"/>
</dbReference>
<dbReference type="PANTHER" id="PTHR35971:SF6">
    <property type="entry name" value="OBSCURIN-LIKE PROTEIN 1"/>
    <property type="match status" value="1"/>
</dbReference>
<dbReference type="PANTHER" id="PTHR35971">
    <property type="entry name" value="SI:DKEY-31G6.6"/>
    <property type="match status" value="1"/>
</dbReference>
<dbReference type="Pfam" id="PF07679">
    <property type="entry name" value="I-set"/>
    <property type="match status" value="15"/>
</dbReference>
<dbReference type="SMART" id="SM00409">
    <property type="entry name" value="IG"/>
    <property type="match status" value="17"/>
</dbReference>
<dbReference type="SMART" id="SM00408">
    <property type="entry name" value="IGc2"/>
    <property type="match status" value="14"/>
</dbReference>
<dbReference type="SUPFAM" id="SSF49265">
    <property type="entry name" value="Fibronectin type III"/>
    <property type="match status" value="1"/>
</dbReference>
<dbReference type="SUPFAM" id="SSF48726">
    <property type="entry name" value="Immunoglobulin"/>
    <property type="match status" value="17"/>
</dbReference>
<dbReference type="PROSITE" id="PS50853">
    <property type="entry name" value="FN3"/>
    <property type="match status" value="1"/>
</dbReference>
<dbReference type="PROSITE" id="PS50835">
    <property type="entry name" value="IG_LIKE"/>
    <property type="match status" value="13"/>
</dbReference>
<feature type="chain" id="PRO_0000430250" description="Obscurin-like protein 1">
    <location>
        <begin position="1"/>
        <end position="1804"/>
    </location>
</feature>
<feature type="domain" description="Ig-like 1">
    <location>
        <begin position="12"/>
        <end position="100"/>
    </location>
</feature>
<feature type="domain" description="Ig-like 2">
    <location>
        <begin position="128"/>
        <end position="225"/>
    </location>
</feature>
<feature type="domain" description="Ig-like 3">
    <location>
        <begin position="241"/>
        <end position="330"/>
    </location>
</feature>
<feature type="domain" description="Ig-like 4">
    <location>
        <begin position="339"/>
        <end position="425"/>
    </location>
</feature>
<feature type="domain" description="Fibronectin type-III" evidence="4">
    <location>
        <begin position="517"/>
        <end position="615"/>
    </location>
</feature>
<feature type="domain" description="Ig-like 5">
    <location>
        <begin position="720"/>
        <end position="800"/>
    </location>
</feature>
<feature type="domain" description="Ig-like 6">
    <location>
        <begin position="804"/>
        <end position="891"/>
    </location>
</feature>
<feature type="domain" description="Ig-like 7">
    <location>
        <begin position="902"/>
        <end position="982"/>
    </location>
</feature>
<feature type="domain" description="Ig-like 8">
    <location>
        <begin position="986"/>
        <end position="1075"/>
    </location>
</feature>
<feature type="domain" description="Ig-like 9">
    <location>
        <begin position="1078"/>
        <end position="1165"/>
    </location>
</feature>
<feature type="domain" description="Ig-like 10">
    <location>
        <begin position="1176"/>
        <end position="1261"/>
    </location>
</feature>
<feature type="domain" description="Ig-like 11">
    <location>
        <begin position="1266"/>
        <end position="1442"/>
    </location>
</feature>
<feature type="domain" description="Ig-like 12">
    <location>
        <begin position="1536"/>
        <end position="1621"/>
    </location>
</feature>
<feature type="domain" description="Ig-like 13">
    <location>
        <begin position="1625"/>
        <end position="1694"/>
    </location>
</feature>
<feature type="domain" description="Ig-like 14">
    <location>
        <begin position="1702"/>
        <end position="1798"/>
    </location>
</feature>
<feature type="region of interest" description="Interaction with TTN" evidence="1">
    <location>
        <begin position="17"/>
        <end position="19"/>
    </location>
</feature>
<feature type="region of interest" description="Interaction with TTN" evidence="1">
    <location>
        <begin position="85"/>
        <end position="94"/>
    </location>
</feature>
<feature type="region of interest" description="Disordered" evidence="5">
    <location>
        <begin position="227"/>
        <end position="249"/>
    </location>
</feature>
<feature type="modified residue" description="Phosphoserine" evidence="2">
    <location>
        <position position="10"/>
    </location>
</feature>
<feature type="disulfide bond" evidence="3">
    <location>
        <begin position="33"/>
        <end position="84"/>
    </location>
</feature>
<feature type="disulfide bond" evidence="3">
    <location>
        <begin position="149"/>
        <end position="209"/>
    </location>
</feature>
<feature type="disulfide bond" evidence="3">
    <location>
        <begin position="267"/>
        <end position="319"/>
    </location>
</feature>
<feature type="disulfide bond" evidence="3">
    <location>
        <begin position="362"/>
        <end position="412"/>
    </location>
</feature>
<feature type="disulfide bond" evidence="3">
    <location>
        <begin position="738"/>
        <end position="788"/>
    </location>
</feature>
<feature type="disulfide bond" evidence="3">
    <location>
        <begin position="829"/>
        <end position="879"/>
    </location>
</feature>
<feature type="disulfide bond" evidence="3">
    <location>
        <begin position="920"/>
        <end position="970"/>
    </location>
</feature>
<feature type="disulfide bond" evidence="3">
    <location>
        <begin position="1011"/>
        <end position="1061"/>
    </location>
</feature>
<feature type="disulfide bond" evidence="3">
    <location>
        <begin position="1103"/>
        <end position="1153"/>
    </location>
</feature>
<feature type="disulfide bond" evidence="3">
    <location>
        <begin position="1195"/>
        <end position="1245"/>
    </location>
</feature>
<feature type="disulfide bond" evidence="3">
    <location>
        <begin position="1289"/>
        <end position="1430"/>
    </location>
</feature>
<feature type="disulfide bond" evidence="3">
    <location>
        <begin position="1558"/>
        <end position="1608"/>
    </location>
</feature>
<feature type="splice variant" id="VSP_055905" description="In isoform 2." evidence="6">
    <location>
        <begin position="1"/>
        <end position="478"/>
    </location>
</feature>
<feature type="splice variant" id="VSP_055906" description="In isoform 2." evidence="6">
    <original>EPPVRIIYPQDEVTLHAVSL</original>
    <variation>GVGLSQPPESPEDNPEPQEC</variation>
    <location>
        <begin position="985"/>
        <end position="1004"/>
    </location>
</feature>
<feature type="splice variant" id="VSP_055907" description="In isoform 2." evidence="6">
    <location>
        <begin position="1005"/>
        <end position="1804"/>
    </location>
</feature>
<feature type="sequence conflict" description="In Ref. 2; AAH51643." evidence="7" ref="2">
    <original>F</original>
    <variation>I</variation>
    <location>
        <position position="786"/>
    </location>
</feature>
<feature type="sequence conflict" description="In Ref. 2; AAH51643." evidence="7" ref="2">
    <original>K</original>
    <variation>E</variation>
    <location>
        <position position="858"/>
    </location>
</feature>
<accession>D3YYU8</accession>
<accession>F7AD47</accession>
<accession>Q80WA6</accession>
<reference key="1">
    <citation type="journal article" date="2009" name="PLoS Biol.">
        <title>Lineage-specific biology revealed by a finished genome assembly of the mouse.</title>
        <authorList>
            <person name="Church D.M."/>
            <person name="Goodstadt L."/>
            <person name="Hillier L.W."/>
            <person name="Zody M.C."/>
            <person name="Goldstein S."/>
            <person name="She X."/>
            <person name="Bult C.J."/>
            <person name="Agarwala R."/>
            <person name="Cherry J.L."/>
            <person name="DiCuccio M."/>
            <person name="Hlavina W."/>
            <person name="Kapustin Y."/>
            <person name="Meric P."/>
            <person name="Maglott D."/>
            <person name="Birtle Z."/>
            <person name="Marques A.C."/>
            <person name="Graves T."/>
            <person name="Zhou S."/>
            <person name="Teague B."/>
            <person name="Potamousis K."/>
            <person name="Churas C."/>
            <person name="Place M."/>
            <person name="Herschleb J."/>
            <person name="Runnheim R."/>
            <person name="Forrest D."/>
            <person name="Amos-Landgraf J."/>
            <person name="Schwartz D.C."/>
            <person name="Cheng Z."/>
            <person name="Lindblad-Toh K."/>
            <person name="Eichler E.E."/>
            <person name="Ponting C.P."/>
        </authorList>
    </citation>
    <scope>NUCLEOTIDE SEQUENCE [LARGE SCALE GENOMIC DNA]</scope>
    <source>
        <strain>C57BL/6J</strain>
    </source>
</reference>
<reference key="2">
    <citation type="journal article" date="2004" name="Genome Res.">
        <title>The status, quality, and expansion of the NIH full-length cDNA project: the Mammalian Gene Collection (MGC).</title>
        <authorList>
            <consortium name="The MGC Project Team"/>
        </authorList>
    </citation>
    <scope>NUCLEOTIDE SEQUENCE [LARGE SCALE MRNA] (ISOFORM 2)</scope>
    <source>
        <strain>C57BL/6J</strain>
        <tissue>Limb</tissue>
    </source>
</reference>
<reference key="3">
    <citation type="journal article" date="2010" name="Cell">
        <title>A tissue-specific atlas of mouse protein phosphorylation and expression.</title>
        <authorList>
            <person name="Huttlin E.L."/>
            <person name="Jedrychowski M.P."/>
            <person name="Elias J.E."/>
            <person name="Goswami T."/>
            <person name="Rad R."/>
            <person name="Beausoleil S.A."/>
            <person name="Villen J."/>
            <person name="Haas W."/>
            <person name="Sowa M.E."/>
            <person name="Gygi S.P."/>
        </authorList>
    </citation>
    <scope>IDENTIFICATION BY MASS SPECTROMETRY [LARGE SCALE ANALYSIS]</scope>
    <source>
        <tissue>Heart</tissue>
        <tissue>Pancreas</tissue>
    </source>
</reference>
<proteinExistence type="evidence at protein level"/>
<evidence type="ECO:0000250" key="1"/>
<evidence type="ECO:0000250" key="2">
    <source>
        <dbReference type="UniProtKB" id="O75147"/>
    </source>
</evidence>
<evidence type="ECO:0000255" key="3">
    <source>
        <dbReference type="PROSITE-ProRule" id="PRU00114"/>
    </source>
</evidence>
<evidence type="ECO:0000255" key="4">
    <source>
        <dbReference type="PROSITE-ProRule" id="PRU00316"/>
    </source>
</evidence>
<evidence type="ECO:0000256" key="5">
    <source>
        <dbReference type="SAM" id="MobiDB-lite"/>
    </source>
</evidence>
<evidence type="ECO:0000303" key="6">
    <source>
    </source>
</evidence>
<evidence type="ECO:0000305" key="7"/>
<organism>
    <name type="scientific">Mus musculus</name>
    <name type="common">Mouse</name>
    <dbReference type="NCBI Taxonomy" id="10090"/>
    <lineage>
        <taxon>Eukaryota</taxon>
        <taxon>Metazoa</taxon>
        <taxon>Chordata</taxon>
        <taxon>Craniata</taxon>
        <taxon>Vertebrata</taxon>
        <taxon>Euteleostomi</taxon>
        <taxon>Mammalia</taxon>
        <taxon>Eutheria</taxon>
        <taxon>Euarchontoglires</taxon>
        <taxon>Glires</taxon>
        <taxon>Rodentia</taxon>
        <taxon>Myomorpha</taxon>
        <taxon>Muroidea</taxon>
        <taxon>Muridae</taxon>
        <taxon>Murinae</taxon>
        <taxon>Mus</taxon>
        <taxon>Mus</taxon>
    </lineage>
</organism>
<protein>
    <recommendedName>
        <fullName>Obscurin-like protein 1</fullName>
    </recommendedName>
</protein>
<name>OBSL1_MOUSE</name>
<keyword id="KW-0025">Alternative splicing</keyword>
<keyword id="KW-0963">Cytoplasm</keyword>
<keyword id="KW-1015">Disulfide bond</keyword>
<keyword id="KW-0333">Golgi apparatus</keyword>
<keyword id="KW-0393">Immunoglobulin domain</keyword>
<keyword id="KW-0597">Phosphoprotein</keyword>
<keyword id="KW-1185">Reference proteome</keyword>
<keyword id="KW-0677">Repeat</keyword>
<comment type="function">
    <text evidence="1">Core component of the 3M complex, a complex required to regulate microtubule dynamics and genome integrity. It is unclear how the 3M complex regulates microtubules, it could act by controlling the level of a microtubule stabilizer. Acts as a regulator of the Cul7-RING(FBXW8) ubiquitin-protein ligase, playing a critical role in the ubiquitin ligase pathway that regulates Golgi morphogenesis and dendrite patterning in brain. Required to localize CUL7 to the Golgi apparatus in neurons (By similarity).</text>
</comment>
<comment type="subunit">
    <text evidence="1">Component of the 3M complex, composed of core components CUL7, CCDC8 and OBSL1. Interacts with CCDC8. Interacts with CUL7; the interaction is direct. Interacts with FBXW8. Interacts (via N-terminal Ig-like domain) with TTN/titin (via C-terminal Ig-like domain); the interaction is direct (By similarity).</text>
</comment>
<comment type="subcellular location">
    <subcellularLocation>
        <location evidence="2">Cytoplasm</location>
    </subcellularLocation>
    <subcellularLocation>
        <location evidence="2">Cytoplasm</location>
        <location evidence="2">Perinuclear region</location>
    </subcellularLocation>
    <subcellularLocation>
        <location evidence="2">Golgi apparatus</location>
    </subcellularLocation>
    <text evidence="2">Colocalizes with CUL7 at the Golgi apparatus in neurons.</text>
</comment>
<comment type="alternative products">
    <event type="alternative splicing"/>
    <isoform>
        <id>D3YYU8-1</id>
        <name>1</name>
        <sequence type="displayed"/>
    </isoform>
    <isoform>
        <id>D3YYU8-2</id>
        <name>2</name>
        <sequence type="described" ref="VSP_055905 VSP_055906 VSP_055907"/>
    </isoform>
</comment>